<gene>
    <name evidence="1" type="primary">psbH</name>
    <name type="ordered locus">Grc000067</name>
</gene>
<protein>
    <recommendedName>
        <fullName evidence="1">Photosystem II reaction center protein H</fullName>
        <shortName evidence="1">PSII-H</shortName>
    </recommendedName>
</protein>
<feature type="chain" id="PRO_0000070509" description="Photosystem II reaction center protein H">
    <location>
        <begin position="1"/>
        <end position="67"/>
    </location>
</feature>
<feature type="transmembrane region" description="Helical" evidence="1">
    <location>
        <begin position="29"/>
        <end position="49"/>
    </location>
</feature>
<comment type="function">
    <text evidence="1">One of the components of the core complex of photosystem II (PSII), required for its stability and/or assembly. PSII is a light-driven water:plastoquinone oxidoreductase that uses light energy to abstract electrons from H(2)O, generating O(2) and a proton gradient subsequently used for ATP formation. It consists of a core antenna complex that captures photons, and an electron transfer chain that converts photonic excitation into a charge separation.</text>
</comment>
<comment type="subunit">
    <text evidence="1">PSII is composed of 1 copy each of membrane proteins PsbA, PsbB, PsbC, PsbD, PsbE, PsbF, PsbH, PsbI, PsbJ, PsbK, PsbL, PsbM, PsbT, PsbX, PsbY, PsbZ, Psb30/Ycf12, at least 3 peripheral proteins of the oxygen-evolving complex and a large number of cofactors. It forms dimeric complexes.</text>
</comment>
<comment type="subcellular location">
    <subcellularLocation>
        <location evidence="1">Plastid</location>
        <location evidence="1">Chloroplast thylakoid membrane</location>
        <topology evidence="1">Single-pass membrane protein</topology>
    </subcellularLocation>
</comment>
<comment type="similarity">
    <text evidence="1">Belongs to the PsbH family.</text>
</comment>
<proteinExistence type="inferred from homology"/>
<accession>Q6B8Y7</accession>
<reference key="1">
    <citation type="journal article" date="2004" name="J. Mol. Evol.">
        <title>Comparative analysis of the complete plastid genome sequence of the red alga Gracilaria tenuistipitata var. liui provides insights into the evolution of rhodoplasts and their relationship to other plastids.</title>
        <authorList>
            <person name="Hagopian J.C."/>
            <person name="Reis M."/>
            <person name="Kitajima J.P."/>
            <person name="Bhattacharya D."/>
            <person name="de Oliveira M.C."/>
        </authorList>
    </citation>
    <scope>NUCLEOTIDE SEQUENCE [LARGE SCALE GENOMIC DNA]</scope>
</reference>
<dbReference type="EMBL" id="AY673996">
    <property type="protein sequence ID" value="AAT79648.1"/>
    <property type="molecule type" value="Genomic_DNA"/>
</dbReference>
<dbReference type="RefSeq" id="YP_063573.1">
    <property type="nucleotide sequence ID" value="NC_006137.1"/>
</dbReference>
<dbReference type="SMR" id="Q6B8Y7"/>
<dbReference type="GeneID" id="2944054"/>
<dbReference type="GO" id="GO:0009535">
    <property type="term" value="C:chloroplast thylakoid membrane"/>
    <property type="evidence" value="ECO:0007669"/>
    <property type="project" value="UniProtKB-SubCell"/>
</dbReference>
<dbReference type="GO" id="GO:0009523">
    <property type="term" value="C:photosystem II"/>
    <property type="evidence" value="ECO:0007669"/>
    <property type="project" value="UniProtKB-KW"/>
</dbReference>
<dbReference type="GO" id="GO:0042301">
    <property type="term" value="F:phosphate ion binding"/>
    <property type="evidence" value="ECO:0007669"/>
    <property type="project" value="InterPro"/>
</dbReference>
<dbReference type="GO" id="GO:0015979">
    <property type="term" value="P:photosynthesis"/>
    <property type="evidence" value="ECO:0007669"/>
    <property type="project" value="UniProtKB-UniRule"/>
</dbReference>
<dbReference type="GO" id="GO:0050821">
    <property type="term" value="P:protein stabilization"/>
    <property type="evidence" value="ECO:0007669"/>
    <property type="project" value="InterPro"/>
</dbReference>
<dbReference type="Gene3D" id="1.20.5.880">
    <property type="entry name" value="Photosystem II reaction center protein H"/>
    <property type="match status" value="1"/>
</dbReference>
<dbReference type="HAMAP" id="MF_00752">
    <property type="entry name" value="PSII_PsbH"/>
    <property type="match status" value="1"/>
</dbReference>
<dbReference type="InterPro" id="IPR001056">
    <property type="entry name" value="PSII_PsbH"/>
</dbReference>
<dbReference type="InterPro" id="IPR036863">
    <property type="entry name" value="PSII_PsbH_sf"/>
</dbReference>
<dbReference type="NCBIfam" id="NF002728">
    <property type="entry name" value="PRK02624.1"/>
    <property type="match status" value="1"/>
</dbReference>
<dbReference type="PANTHER" id="PTHR34469">
    <property type="entry name" value="PHOTOSYSTEM II REACTION CENTER PROTEIN H"/>
    <property type="match status" value="1"/>
</dbReference>
<dbReference type="PANTHER" id="PTHR34469:SF4">
    <property type="entry name" value="PHOTOSYSTEM II REACTION CENTER PROTEIN H"/>
    <property type="match status" value="1"/>
</dbReference>
<dbReference type="Pfam" id="PF00737">
    <property type="entry name" value="PsbH"/>
    <property type="match status" value="1"/>
</dbReference>
<dbReference type="SUPFAM" id="SSF161025">
    <property type="entry name" value="Photosystem II 10 kDa phosphoprotein PsbH"/>
    <property type="match status" value="1"/>
</dbReference>
<evidence type="ECO:0000255" key="1">
    <source>
        <dbReference type="HAMAP-Rule" id="MF_00752"/>
    </source>
</evidence>
<organism>
    <name type="scientific">Gracilaria tenuistipitata var. liui</name>
    <name type="common">Red alga</name>
    <dbReference type="NCBI Taxonomy" id="285951"/>
    <lineage>
        <taxon>Eukaryota</taxon>
        <taxon>Rhodophyta</taxon>
        <taxon>Florideophyceae</taxon>
        <taxon>Rhodymeniophycidae</taxon>
        <taxon>Gracilariales</taxon>
        <taxon>Gracilariaceae</taxon>
        <taxon>Gracilaria</taxon>
        <taxon>Gracilaria tenuistipitata</taxon>
    </lineage>
</organism>
<keyword id="KW-0150">Chloroplast</keyword>
<keyword id="KW-0472">Membrane</keyword>
<keyword id="KW-0602">Photosynthesis</keyword>
<keyword id="KW-0604">Photosystem II</keyword>
<keyword id="KW-0934">Plastid</keyword>
<keyword id="KW-0793">Thylakoid</keyword>
<keyword id="KW-0812">Transmembrane</keyword>
<keyword id="KW-1133">Transmembrane helix</keyword>
<sequence>MALRTRLGEILRPLNSEYGKVAPGWGTTPIMGVFMLLFFLFLLIILQIYNSSLILENVDVDWATLGN</sequence>
<name>PSBH_GRATL</name>
<geneLocation type="chloroplast"/>